<name>NAGZ_SALPA</name>
<sequence>MGPVMLNVEGCELDAEEREILAHPLVGGLILFTRNYHDPEQLRELVRQIRAASRNHLVVAVDQEGGRVQRFREGFTRLPAAQSFFALHGLEEGGRLAQEAGWLMASEMIAMDIDISFAPVLDVGHISAAIGERSYHADPAKALAMATRFIDGMHDAGMKTTGKHFPGHGAVTADSHKETPCDPRPETDIRGKDMSVFRALISENKLDAIMPAHVIYRAIDPRPASGSPYWLKTVLRQELGFDGVIFSDDLSMEGAAIMGSYAERAQASLDAGCDMILVCNNRKGAVSVLDNLSPIKAERVTRLYHKGSFSRRELMDSARWKTASAQLNQLHERWQEEKAGH</sequence>
<keyword id="KW-0131">Cell cycle</keyword>
<keyword id="KW-0132">Cell division</keyword>
<keyword id="KW-0133">Cell shape</keyword>
<keyword id="KW-0961">Cell wall biogenesis/degradation</keyword>
<keyword id="KW-0963">Cytoplasm</keyword>
<keyword id="KW-0326">Glycosidase</keyword>
<keyword id="KW-0378">Hydrolase</keyword>
<keyword id="KW-0573">Peptidoglycan synthesis</keyword>
<dbReference type="EC" id="3.2.1.52" evidence="1"/>
<dbReference type="EMBL" id="CP000026">
    <property type="protein sequence ID" value="AAV77569.1"/>
    <property type="status" value="ALT_INIT"/>
    <property type="molecule type" value="Genomic_DNA"/>
</dbReference>
<dbReference type="RefSeq" id="WP_000529339.1">
    <property type="nucleotide sequence ID" value="NC_006511.1"/>
</dbReference>
<dbReference type="SMR" id="Q5PGT0"/>
<dbReference type="CAZy" id="GH3">
    <property type="family name" value="Glycoside Hydrolase Family 3"/>
</dbReference>
<dbReference type="KEGG" id="spt:SPA1642"/>
<dbReference type="HOGENOM" id="CLU_008392_0_0_6"/>
<dbReference type="UniPathway" id="UPA00544"/>
<dbReference type="Proteomes" id="UP000008185">
    <property type="component" value="Chromosome"/>
</dbReference>
<dbReference type="GO" id="GO:0005737">
    <property type="term" value="C:cytoplasm"/>
    <property type="evidence" value="ECO:0007669"/>
    <property type="project" value="UniProtKB-SubCell"/>
</dbReference>
<dbReference type="GO" id="GO:0004563">
    <property type="term" value="F:beta-N-acetylhexosaminidase activity"/>
    <property type="evidence" value="ECO:0007669"/>
    <property type="project" value="UniProtKB-UniRule"/>
</dbReference>
<dbReference type="GO" id="GO:0005975">
    <property type="term" value="P:carbohydrate metabolic process"/>
    <property type="evidence" value="ECO:0007669"/>
    <property type="project" value="InterPro"/>
</dbReference>
<dbReference type="GO" id="GO:0051301">
    <property type="term" value="P:cell division"/>
    <property type="evidence" value="ECO:0007669"/>
    <property type="project" value="UniProtKB-KW"/>
</dbReference>
<dbReference type="GO" id="GO:0071555">
    <property type="term" value="P:cell wall organization"/>
    <property type="evidence" value="ECO:0007669"/>
    <property type="project" value="UniProtKB-KW"/>
</dbReference>
<dbReference type="GO" id="GO:0009252">
    <property type="term" value="P:peptidoglycan biosynthetic process"/>
    <property type="evidence" value="ECO:0007669"/>
    <property type="project" value="UniProtKB-KW"/>
</dbReference>
<dbReference type="GO" id="GO:0009254">
    <property type="term" value="P:peptidoglycan turnover"/>
    <property type="evidence" value="ECO:0007669"/>
    <property type="project" value="UniProtKB-UniRule"/>
</dbReference>
<dbReference type="GO" id="GO:0008360">
    <property type="term" value="P:regulation of cell shape"/>
    <property type="evidence" value="ECO:0007669"/>
    <property type="project" value="UniProtKB-KW"/>
</dbReference>
<dbReference type="FunFam" id="3.20.20.300:FF:000001">
    <property type="entry name" value="Beta-hexosaminidase"/>
    <property type="match status" value="1"/>
</dbReference>
<dbReference type="Gene3D" id="3.20.20.300">
    <property type="entry name" value="Glycoside hydrolase, family 3, N-terminal domain"/>
    <property type="match status" value="1"/>
</dbReference>
<dbReference type="HAMAP" id="MF_00364">
    <property type="entry name" value="NagZ"/>
    <property type="match status" value="1"/>
</dbReference>
<dbReference type="InterPro" id="IPR022956">
    <property type="entry name" value="Beta_hexosaminidase_bac"/>
</dbReference>
<dbReference type="InterPro" id="IPR019800">
    <property type="entry name" value="Glyco_hydro_3_AS"/>
</dbReference>
<dbReference type="InterPro" id="IPR001764">
    <property type="entry name" value="Glyco_hydro_3_N"/>
</dbReference>
<dbReference type="InterPro" id="IPR036962">
    <property type="entry name" value="Glyco_hydro_3_N_sf"/>
</dbReference>
<dbReference type="InterPro" id="IPR017853">
    <property type="entry name" value="Glycoside_hydrolase_SF"/>
</dbReference>
<dbReference type="InterPro" id="IPR050226">
    <property type="entry name" value="NagZ_Beta-hexosaminidase"/>
</dbReference>
<dbReference type="NCBIfam" id="NF003740">
    <property type="entry name" value="PRK05337.1"/>
    <property type="match status" value="1"/>
</dbReference>
<dbReference type="PANTHER" id="PTHR30480:SF13">
    <property type="entry name" value="BETA-HEXOSAMINIDASE"/>
    <property type="match status" value="1"/>
</dbReference>
<dbReference type="PANTHER" id="PTHR30480">
    <property type="entry name" value="BETA-HEXOSAMINIDASE-RELATED"/>
    <property type="match status" value="1"/>
</dbReference>
<dbReference type="Pfam" id="PF00933">
    <property type="entry name" value="Glyco_hydro_3"/>
    <property type="match status" value="1"/>
</dbReference>
<dbReference type="SUPFAM" id="SSF51445">
    <property type="entry name" value="(Trans)glycosidases"/>
    <property type="match status" value="1"/>
</dbReference>
<dbReference type="PROSITE" id="PS00775">
    <property type="entry name" value="GLYCOSYL_HYDROL_F3"/>
    <property type="match status" value="1"/>
</dbReference>
<gene>
    <name evidence="1" type="primary">nagZ</name>
    <name type="ordered locus">SPA1642</name>
</gene>
<reference key="1">
    <citation type="journal article" date="2004" name="Nat. Genet.">
        <title>Comparison of genome degradation in Paratyphi A and Typhi, human-restricted serovars of Salmonella enterica that cause typhoid.</title>
        <authorList>
            <person name="McClelland M."/>
            <person name="Sanderson K.E."/>
            <person name="Clifton S.W."/>
            <person name="Latreille P."/>
            <person name="Porwollik S."/>
            <person name="Sabo A."/>
            <person name="Meyer R."/>
            <person name="Bieri T."/>
            <person name="Ozersky P."/>
            <person name="McLellan M."/>
            <person name="Harkins C.R."/>
            <person name="Wang C."/>
            <person name="Nguyen C."/>
            <person name="Berghoff A."/>
            <person name="Elliott G."/>
            <person name="Kohlberg S."/>
            <person name="Strong C."/>
            <person name="Du F."/>
            <person name="Carter J."/>
            <person name="Kremizki C."/>
            <person name="Layman D."/>
            <person name="Leonard S."/>
            <person name="Sun H."/>
            <person name="Fulton L."/>
            <person name="Nash W."/>
            <person name="Miner T."/>
            <person name="Minx P."/>
            <person name="Delehaunty K."/>
            <person name="Fronick C."/>
            <person name="Magrini V."/>
            <person name="Nhan M."/>
            <person name="Warren W."/>
            <person name="Florea L."/>
            <person name="Spieth J."/>
            <person name="Wilson R.K."/>
        </authorList>
    </citation>
    <scope>NUCLEOTIDE SEQUENCE [LARGE SCALE GENOMIC DNA]</scope>
    <source>
        <strain>ATCC 9150 / SARB42</strain>
    </source>
</reference>
<organism>
    <name type="scientific">Salmonella paratyphi A (strain ATCC 9150 / SARB42)</name>
    <dbReference type="NCBI Taxonomy" id="295319"/>
    <lineage>
        <taxon>Bacteria</taxon>
        <taxon>Pseudomonadati</taxon>
        <taxon>Pseudomonadota</taxon>
        <taxon>Gammaproteobacteria</taxon>
        <taxon>Enterobacterales</taxon>
        <taxon>Enterobacteriaceae</taxon>
        <taxon>Salmonella</taxon>
    </lineage>
</organism>
<accession>Q5PGT0</accession>
<protein>
    <recommendedName>
        <fullName evidence="1">Beta-hexosaminidase</fullName>
        <ecNumber evidence="1">3.2.1.52</ecNumber>
    </recommendedName>
    <alternativeName>
        <fullName evidence="1">Beta-N-acetylhexosaminidase</fullName>
    </alternativeName>
    <alternativeName>
        <fullName evidence="1">N-acetyl-beta-glucosaminidase</fullName>
    </alternativeName>
</protein>
<proteinExistence type="inferred from homology"/>
<comment type="function">
    <text evidence="1">Plays a role in peptidoglycan recycling by cleaving the terminal beta-1,4-linked N-acetylglucosamine (GlcNAc) from peptide-linked peptidoglycan fragments, giving rise to free GlcNAc, anhydro-N-acetylmuramic acid and anhydro-N-acetylmuramic acid-linked peptides.</text>
</comment>
<comment type="catalytic activity">
    <reaction evidence="1">
        <text>Hydrolysis of terminal non-reducing N-acetyl-D-hexosamine residues in N-acetyl-beta-D-hexosaminides.</text>
        <dbReference type="EC" id="3.2.1.52"/>
    </reaction>
</comment>
<comment type="pathway">
    <text evidence="1">Cell wall biogenesis; peptidoglycan recycling.</text>
</comment>
<comment type="subcellular location">
    <subcellularLocation>
        <location evidence="1">Cytoplasm</location>
    </subcellularLocation>
</comment>
<comment type="similarity">
    <text evidence="1">Belongs to the glycosyl hydrolase 3 family. NagZ subfamily.</text>
</comment>
<comment type="sequence caution" evidence="2">
    <conflict type="erroneous initiation">
        <sequence resource="EMBL-CDS" id="AAV77569"/>
    </conflict>
</comment>
<feature type="chain" id="PRO_0000234922" description="Beta-hexosaminidase">
    <location>
        <begin position="1"/>
        <end position="341"/>
    </location>
</feature>
<feature type="active site" description="Proton donor/acceptor" evidence="1">
    <location>
        <position position="176"/>
    </location>
</feature>
<feature type="active site" description="Nucleophile" evidence="1">
    <location>
        <position position="248"/>
    </location>
</feature>
<feature type="binding site" evidence="1">
    <location>
        <position position="62"/>
    </location>
    <ligand>
        <name>substrate</name>
    </ligand>
</feature>
<feature type="binding site" evidence="1">
    <location>
        <position position="70"/>
    </location>
    <ligand>
        <name>substrate</name>
    </ligand>
</feature>
<feature type="binding site" evidence="1">
    <location>
        <position position="133"/>
    </location>
    <ligand>
        <name>substrate</name>
    </ligand>
</feature>
<feature type="binding site" evidence="1">
    <location>
        <begin position="163"/>
        <end position="164"/>
    </location>
    <ligand>
        <name>substrate</name>
    </ligand>
</feature>
<feature type="site" description="Important for catalytic activity" evidence="1">
    <location>
        <position position="174"/>
    </location>
</feature>
<evidence type="ECO:0000255" key="1">
    <source>
        <dbReference type="HAMAP-Rule" id="MF_00364"/>
    </source>
</evidence>
<evidence type="ECO:0000305" key="2"/>